<gene>
    <name evidence="1" type="primary">groES</name>
    <name evidence="1" type="synonym">groS</name>
    <name type="ordered locus">BCAH820_0292</name>
</gene>
<comment type="function">
    <text evidence="1">Together with the chaperonin GroEL, plays an essential role in assisting protein folding. The GroEL-GroES system forms a nano-cage that allows encapsulation of the non-native substrate proteins and provides a physical environment optimized to promote and accelerate protein folding. GroES binds to the apical surface of the GroEL ring, thereby capping the opening of the GroEL channel.</text>
</comment>
<comment type="subunit">
    <text evidence="1">Heptamer of 7 subunits arranged in a ring. Interacts with the chaperonin GroEL.</text>
</comment>
<comment type="subcellular location">
    <subcellularLocation>
        <location evidence="1">Cytoplasm</location>
    </subcellularLocation>
</comment>
<comment type="similarity">
    <text evidence="1">Belongs to the GroES chaperonin family.</text>
</comment>
<accession>B7JM59</accession>
<proteinExistence type="inferred from homology"/>
<protein>
    <recommendedName>
        <fullName evidence="1">Co-chaperonin GroES</fullName>
    </recommendedName>
    <alternativeName>
        <fullName evidence="1">10 kDa chaperonin</fullName>
    </alternativeName>
    <alternativeName>
        <fullName evidence="1">Chaperonin-10</fullName>
        <shortName evidence="1">Cpn10</shortName>
    </alternativeName>
</protein>
<name>CH10_BACC0</name>
<organism>
    <name type="scientific">Bacillus cereus (strain AH820)</name>
    <dbReference type="NCBI Taxonomy" id="405535"/>
    <lineage>
        <taxon>Bacteria</taxon>
        <taxon>Bacillati</taxon>
        <taxon>Bacillota</taxon>
        <taxon>Bacilli</taxon>
        <taxon>Bacillales</taxon>
        <taxon>Bacillaceae</taxon>
        <taxon>Bacillus</taxon>
        <taxon>Bacillus cereus group</taxon>
    </lineage>
</organism>
<keyword id="KW-0143">Chaperone</keyword>
<keyword id="KW-0963">Cytoplasm</keyword>
<sequence length="94" mass="10070">MLKPLGDRVVIELVQAEEKTASGIVLPDTAKEKPQEGKVIAVGTGRVLENGERVALEVAAGDLIIFSKYAGTEVKYEGTDYLILRESDILAVIG</sequence>
<feature type="chain" id="PRO_1000129622" description="Co-chaperonin GroES">
    <location>
        <begin position="1"/>
        <end position="94"/>
    </location>
</feature>
<evidence type="ECO:0000255" key="1">
    <source>
        <dbReference type="HAMAP-Rule" id="MF_00580"/>
    </source>
</evidence>
<dbReference type="EMBL" id="CP001283">
    <property type="protein sequence ID" value="ACK87852.1"/>
    <property type="molecule type" value="Genomic_DNA"/>
</dbReference>
<dbReference type="RefSeq" id="WP_000917306.1">
    <property type="nucleotide sequence ID" value="NC_011773.1"/>
</dbReference>
<dbReference type="SMR" id="B7JM59"/>
<dbReference type="GeneID" id="93010771"/>
<dbReference type="KEGG" id="bcu:BCAH820_0292"/>
<dbReference type="HOGENOM" id="CLU_132825_2_0_9"/>
<dbReference type="Proteomes" id="UP000001363">
    <property type="component" value="Chromosome"/>
</dbReference>
<dbReference type="GO" id="GO:0005737">
    <property type="term" value="C:cytoplasm"/>
    <property type="evidence" value="ECO:0007669"/>
    <property type="project" value="UniProtKB-SubCell"/>
</dbReference>
<dbReference type="GO" id="GO:0005524">
    <property type="term" value="F:ATP binding"/>
    <property type="evidence" value="ECO:0007669"/>
    <property type="project" value="InterPro"/>
</dbReference>
<dbReference type="GO" id="GO:0046872">
    <property type="term" value="F:metal ion binding"/>
    <property type="evidence" value="ECO:0007669"/>
    <property type="project" value="TreeGrafter"/>
</dbReference>
<dbReference type="GO" id="GO:0044183">
    <property type="term" value="F:protein folding chaperone"/>
    <property type="evidence" value="ECO:0007669"/>
    <property type="project" value="InterPro"/>
</dbReference>
<dbReference type="GO" id="GO:0051087">
    <property type="term" value="F:protein-folding chaperone binding"/>
    <property type="evidence" value="ECO:0007669"/>
    <property type="project" value="TreeGrafter"/>
</dbReference>
<dbReference type="GO" id="GO:0051082">
    <property type="term" value="F:unfolded protein binding"/>
    <property type="evidence" value="ECO:0007669"/>
    <property type="project" value="TreeGrafter"/>
</dbReference>
<dbReference type="GO" id="GO:0051085">
    <property type="term" value="P:chaperone cofactor-dependent protein refolding"/>
    <property type="evidence" value="ECO:0007669"/>
    <property type="project" value="TreeGrafter"/>
</dbReference>
<dbReference type="CDD" id="cd00320">
    <property type="entry name" value="cpn10"/>
    <property type="match status" value="1"/>
</dbReference>
<dbReference type="FunFam" id="2.30.33.40:FF:000001">
    <property type="entry name" value="10 kDa chaperonin"/>
    <property type="match status" value="1"/>
</dbReference>
<dbReference type="Gene3D" id="2.30.33.40">
    <property type="entry name" value="GroES chaperonin"/>
    <property type="match status" value="1"/>
</dbReference>
<dbReference type="HAMAP" id="MF_00580">
    <property type="entry name" value="CH10"/>
    <property type="match status" value="1"/>
</dbReference>
<dbReference type="InterPro" id="IPR020818">
    <property type="entry name" value="Chaperonin_GroES"/>
</dbReference>
<dbReference type="InterPro" id="IPR037124">
    <property type="entry name" value="Chaperonin_GroES_sf"/>
</dbReference>
<dbReference type="InterPro" id="IPR018369">
    <property type="entry name" value="Chaprnonin_Cpn10_CS"/>
</dbReference>
<dbReference type="InterPro" id="IPR011032">
    <property type="entry name" value="GroES-like_sf"/>
</dbReference>
<dbReference type="NCBIfam" id="NF001527">
    <property type="entry name" value="PRK00364.1-2"/>
    <property type="match status" value="1"/>
</dbReference>
<dbReference type="NCBIfam" id="NF001530">
    <property type="entry name" value="PRK00364.1-6"/>
    <property type="match status" value="1"/>
</dbReference>
<dbReference type="NCBIfam" id="NF001531">
    <property type="entry name" value="PRK00364.2-2"/>
    <property type="match status" value="1"/>
</dbReference>
<dbReference type="NCBIfam" id="NF001533">
    <property type="entry name" value="PRK00364.2-4"/>
    <property type="match status" value="1"/>
</dbReference>
<dbReference type="NCBIfam" id="NF001534">
    <property type="entry name" value="PRK00364.2-5"/>
    <property type="match status" value="1"/>
</dbReference>
<dbReference type="PANTHER" id="PTHR10772">
    <property type="entry name" value="10 KDA HEAT SHOCK PROTEIN"/>
    <property type="match status" value="1"/>
</dbReference>
<dbReference type="PANTHER" id="PTHR10772:SF58">
    <property type="entry name" value="CO-CHAPERONIN GROES"/>
    <property type="match status" value="1"/>
</dbReference>
<dbReference type="Pfam" id="PF00166">
    <property type="entry name" value="Cpn10"/>
    <property type="match status" value="1"/>
</dbReference>
<dbReference type="PRINTS" id="PR00297">
    <property type="entry name" value="CHAPERONIN10"/>
</dbReference>
<dbReference type="SMART" id="SM00883">
    <property type="entry name" value="Cpn10"/>
    <property type="match status" value="1"/>
</dbReference>
<dbReference type="SUPFAM" id="SSF50129">
    <property type="entry name" value="GroES-like"/>
    <property type="match status" value="1"/>
</dbReference>
<dbReference type="PROSITE" id="PS00681">
    <property type="entry name" value="CHAPERONINS_CPN10"/>
    <property type="match status" value="1"/>
</dbReference>
<reference key="1">
    <citation type="submission" date="2008-10" db="EMBL/GenBank/DDBJ databases">
        <title>Genome sequence of Bacillus cereus AH820.</title>
        <authorList>
            <person name="Dodson R.J."/>
            <person name="Durkin A.S."/>
            <person name="Rosovitz M.J."/>
            <person name="Rasko D.A."/>
            <person name="Hoffmaster A."/>
            <person name="Ravel J."/>
            <person name="Sutton G."/>
        </authorList>
    </citation>
    <scope>NUCLEOTIDE SEQUENCE [LARGE SCALE GENOMIC DNA]</scope>
    <source>
        <strain>AH820</strain>
    </source>
</reference>